<gene>
    <name type="ordered locus">Noca_4252</name>
</gene>
<dbReference type="EC" id="5.99.-.-" evidence="1"/>
<dbReference type="EMBL" id="CP000509">
    <property type="protein sequence ID" value="ABL83749.1"/>
    <property type="molecule type" value="Genomic_DNA"/>
</dbReference>
<dbReference type="RefSeq" id="WP_011757678.1">
    <property type="nucleotide sequence ID" value="NC_008699.1"/>
</dbReference>
<dbReference type="SMR" id="A1SPL4"/>
<dbReference type="STRING" id="196162.Noca_4252"/>
<dbReference type="KEGG" id="nca:Noca_4252"/>
<dbReference type="eggNOG" id="COG4044">
    <property type="taxonomic scope" value="Bacteria"/>
</dbReference>
<dbReference type="HOGENOM" id="CLU_085483_0_0_11"/>
<dbReference type="OrthoDB" id="4804006at2"/>
<dbReference type="Proteomes" id="UP000000640">
    <property type="component" value="Chromosome"/>
</dbReference>
<dbReference type="GO" id="GO:0020037">
    <property type="term" value="F:heme binding"/>
    <property type="evidence" value="ECO:0007669"/>
    <property type="project" value="UniProtKB-UniRule"/>
</dbReference>
<dbReference type="GO" id="GO:0046872">
    <property type="term" value="F:metal ion binding"/>
    <property type="evidence" value="ECO:0007669"/>
    <property type="project" value="UniProtKB-KW"/>
</dbReference>
<dbReference type="GO" id="GO:0062213">
    <property type="term" value="F:peroxynitrite isomerase activity"/>
    <property type="evidence" value="ECO:0007669"/>
    <property type="project" value="UniProtKB-UniRule"/>
</dbReference>
<dbReference type="CDD" id="cd07828">
    <property type="entry name" value="lipocalin_heme-bd-THAP4-like"/>
    <property type="match status" value="1"/>
</dbReference>
<dbReference type="Gene3D" id="2.40.128.20">
    <property type="match status" value="1"/>
</dbReference>
<dbReference type="HAMAP" id="MF_01297">
    <property type="entry name" value="nitrobindin"/>
    <property type="match status" value="1"/>
</dbReference>
<dbReference type="InterPro" id="IPR012674">
    <property type="entry name" value="Calycin"/>
</dbReference>
<dbReference type="InterPro" id="IPR022939">
    <property type="entry name" value="Nb(III)_bact/plant"/>
</dbReference>
<dbReference type="InterPro" id="IPR045165">
    <property type="entry name" value="Nitrobindin"/>
</dbReference>
<dbReference type="InterPro" id="IPR014878">
    <property type="entry name" value="THAP4-like_heme-bd"/>
</dbReference>
<dbReference type="PANTHER" id="PTHR15854:SF4">
    <property type="entry name" value="PEROXYNITRITE ISOMERASE THAP4"/>
    <property type="match status" value="1"/>
</dbReference>
<dbReference type="PANTHER" id="PTHR15854">
    <property type="entry name" value="THAP4 PROTEIN"/>
    <property type="match status" value="1"/>
</dbReference>
<dbReference type="Pfam" id="PF08768">
    <property type="entry name" value="THAP4_heme-bd"/>
    <property type="match status" value="1"/>
</dbReference>
<dbReference type="SUPFAM" id="SSF50814">
    <property type="entry name" value="Lipocalins"/>
    <property type="match status" value="1"/>
</dbReference>
<evidence type="ECO:0000255" key="1">
    <source>
        <dbReference type="HAMAP-Rule" id="MF_01297"/>
    </source>
</evidence>
<reference key="1">
    <citation type="submission" date="2006-12" db="EMBL/GenBank/DDBJ databases">
        <title>Complete sequence of chromosome 1 of Nocardioides sp. JS614.</title>
        <authorList>
            <person name="Copeland A."/>
            <person name="Lucas S."/>
            <person name="Lapidus A."/>
            <person name="Barry K."/>
            <person name="Detter J.C."/>
            <person name="Glavina del Rio T."/>
            <person name="Hammon N."/>
            <person name="Israni S."/>
            <person name="Dalin E."/>
            <person name="Tice H."/>
            <person name="Pitluck S."/>
            <person name="Thompson L.S."/>
            <person name="Brettin T."/>
            <person name="Bruce D."/>
            <person name="Han C."/>
            <person name="Tapia R."/>
            <person name="Schmutz J."/>
            <person name="Larimer F."/>
            <person name="Land M."/>
            <person name="Hauser L."/>
            <person name="Kyrpides N."/>
            <person name="Kim E."/>
            <person name="Mattes T."/>
            <person name="Gossett J."/>
            <person name="Richardson P."/>
        </authorList>
    </citation>
    <scope>NUCLEOTIDE SEQUENCE [LARGE SCALE GENOMIC DNA]</scope>
    <source>
        <strain>ATCC BAA-499 / JS614</strain>
    </source>
</reference>
<comment type="function">
    <text evidence="1">Heme-binding protein able to scavenge peroxynitrite and to protect free L-tyrosine against peroxynitrite-mediated nitration, by acting as a peroxynitrite isomerase that converts peroxynitrite to nitrate. Therefore, this protein likely plays a role in peroxynitrite sensing and in the detoxification of reactive nitrogen and oxygen species (RNS and ROS, respectively). Is able to bind nitric oxide (NO) in vitro, but may act as a sensor of peroxynitrite levels in vivo.</text>
</comment>
<comment type="catalytic activity">
    <reaction evidence="1">
        <text>peroxynitrite = nitrate</text>
        <dbReference type="Rhea" id="RHEA:63116"/>
        <dbReference type="ChEBI" id="CHEBI:17632"/>
        <dbReference type="ChEBI" id="CHEBI:25941"/>
    </reaction>
    <physiologicalReaction direction="left-to-right" evidence="1">
        <dbReference type="Rhea" id="RHEA:63117"/>
    </physiologicalReaction>
</comment>
<comment type="cofactor">
    <cofactor evidence="1">
        <name>heme b</name>
        <dbReference type="ChEBI" id="CHEBI:60344"/>
    </cofactor>
    <text evidence="1">Binds 1 heme b group per subunit, that coordinates a highly solvent-exposed Fe(III) atom.</text>
</comment>
<comment type="pathway">
    <text evidence="1">Nitrogen metabolism.</text>
</comment>
<comment type="subunit">
    <text evidence="1">Homodimer.</text>
</comment>
<comment type="domain">
    <text evidence="1">Forms a 10-stranded antiparallel beta-barrel structure able to accommodate a hydrophobic ligand in its interior. In fact, this fold hosts the heme group, which is located in a wide surface cleft.</text>
</comment>
<comment type="similarity">
    <text evidence="1">Belongs to the nitrobindin family.</text>
</comment>
<feature type="chain" id="PRO_0000356943" description="Peroxynitrite isomerase">
    <location>
        <begin position="1"/>
        <end position="164"/>
    </location>
</feature>
<feature type="short sequence motif" description="GXWXGXG" evidence="1">
    <location>
        <begin position="21"/>
        <end position="27"/>
    </location>
</feature>
<feature type="binding site" evidence="1">
    <location>
        <position position="130"/>
    </location>
    <ligand>
        <name>heme b</name>
        <dbReference type="ChEBI" id="CHEBI:60344"/>
    </ligand>
</feature>
<feature type="binding site" description="axial binding residue" evidence="1">
    <location>
        <position position="156"/>
    </location>
    <ligand>
        <name>heme b</name>
        <dbReference type="ChEBI" id="CHEBI:60344"/>
    </ligand>
    <ligandPart>
        <name>Fe</name>
        <dbReference type="ChEBI" id="CHEBI:18248"/>
    </ligandPart>
</feature>
<accession>A1SPL4</accession>
<keyword id="KW-0349">Heme</keyword>
<keyword id="KW-0408">Iron</keyword>
<keyword id="KW-0413">Isomerase</keyword>
<keyword id="KW-0479">Metal-binding</keyword>
<keyword id="KW-1185">Reference proteome</keyword>
<proteinExistence type="inferred from homology"/>
<organism>
    <name type="scientific">Nocardioides sp. (strain ATCC BAA-499 / JS614)</name>
    <dbReference type="NCBI Taxonomy" id="196162"/>
    <lineage>
        <taxon>Bacteria</taxon>
        <taxon>Bacillati</taxon>
        <taxon>Actinomycetota</taxon>
        <taxon>Actinomycetes</taxon>
        <taxon>Propionibacteriales</taxon>
        <taxon>Nocardioidaceae</taxon>
        <taxon>Nocardioides</taxon>
    </lineage>
</organism>
<sequence length="164" mass="18473">MPFELPDNLHPDCGPVAWLLGRWGGRGHGDYPTIEGFQYGQELVFTHDGRPFFHYFARAWIVDDAGEKVREAAQEAGFLRCKPEGRVELLLTHNTGFAEVWYGEAADGKLELTTDAVVRTESAKEYTGGKRLYGNVEGDLLYAYDMAAMGQPLQPHLWARLVRQ</sequence>
<name>NB_NOCSJ</name>
<protein>
    <recommendedName>
        <fullName>Peroxynitrite isomerase</fullName>
        <ecNumber evidence="1">5.99.-.-</ecNumber>
    </recommendedName>
    <alternativeName>
        <fullName>Ferric nitrobindin</fullName>
        <shortName>Nb(III)</shortName>
    </alternativeName>
</protein>